<comment type="function">
    <text evidence="3 7">Leghemoglobin that reversibly binds oxygen O(2) through a pentacoordinated heme iron (PubMed:11161022). In root nodules, facilitates the diffusion of oxygen to the bacteroids while preventing the bacterial nitrogenase from being inactivated by buffering dioxygen, nitric oxide and carbon monoxide, and promoting the formation of reactive oxygen species (ROS, e.g. H(2)O(2)) (By similarity). This role is essential for symbiotic nitrogen fixation (SNF) (By similarity).</text>
</comment>
<comment type="subunit">
    <text evidence="4">Monomer.</text>
</comment>
<comment type="subcellular location">
    <subcellularLocation>
        <location evidence="4">Cytoplasm</location>
        <location evidence="4">Cytosol</location>
    </subcellularLocation>
    <subcellularLocation>
        <location evidence="4">Nucleus</location>
    </subcellularLocation>
</comment>
<comment type="tissue specificity">
    <text evidence="7">Root nodules.</text>
</comment>
<comment type="developmental stage">
    <text evidence="7">Localized in the region from infection zone II to the distal part of nitrogen fixation zone III in effective nodules (PubMed:11161022). In ineffective nodules, restricted to the distal portion of the central tissue (PubMed:11161022).</text>
</comment>
<comment type="induction">
    <text evidence="8 9">Strongly reduced levels in boron-deficient nodules (PubMed:20132519). Inhibited by abscisic acid (ABA) in parallel with lower nitrogen fixation in nodules (PubMed:11283173).</text>
</comment>
<comment type="PTM">
    <text evidence="2">Nitrated in effective nodules and particularly in hypoxic conditions; this mechanism may play a protective role in the symbiosis by buffering toxic peroxynitrite NO(2)(-). Nitration level decrease during nodule senescence.</text>
</comment>
<comment type="PTM">
    <text evidence="5">Phosphorylation at Ser-44 disrupts the molecular environment of its porphyrin ring oxygen binding pocket, thus leading to a reduced oxygen consumption and to the delivery of oxygen O(2) to symbiosomes.</text>
</comment>
<comment type="similarity">
    <text evidence="11">Belongs to the plant globin family.</text>
</comment>
<protein>
    <recommendedName>
        <fullName evidence="10">Leghemoglobin Lb120-1</fullName>
        <shortName evidence="10">PsLb120-1</shortName>
    </recommendedName>
</protein>
<proteinExistence type="evidence at transcript level"/>
<sequence>MGFTEKQEALVNSSWELFKQNPSYSVLFYTIILKKAPAAKGMFSFLKDSAEVVDSPKLQAHAEKVFGMVHDSAIQLRASGEVVVGDATLGAIHIQKGVVDPHFVVVKEALLETIKEASGEKWSEELSTAWEVAYEGLASAIKKAMN</sequence>
<name>LGB3_PEA</name>
<keyword id="KW-0963">Cytoplasm</keyword>
<keyword id="KW-0349">Heme</keyword>
<keyword id="KW-0408">Iron</keyword>
<keyword id="KW-0479">Metal-binding</keyword>
<keyword id="KW-0944">Nitration</keyword>
<keyword id="KW-0535">Nitrogen fixation</keyword>
<keyword id="KW-0536">Nodulation</keyword>
<keyword id="KW-0539">Nucleus</keyword>
<keyword id="KW-0561">Oxygen transport</keyword>
<keyword id="KW-0597">Phosphoprotein</keyword>
<keyword id="KW-0813">Transport</keyword>
<accession>O80405</accession>
<dbReference type="EMBL" id="AB015719">
    <property type="protein sequence ID" value="BAA31155.1"/>
    <property type="molecule type" value="mRNA"/>
</dbReference>
<dbReference type="PIR" id="T06217">
    <property type="entry name" value="T06217"/>
</dbReference>
<dbReference type="RefSeq" id="NP_001414490.1">
    <property type="nucleotide sequence ID" value="NM_001427561.1"/>
</dbReference>
<dbReference type="SMR" id="O80405"/>
<dbReference type="EnsemblPlants" id="Psat2g039720.1">
    <property type="protein sequence ID" value="Psat2g039720.1.cds"/>
    <property type="gene ID" value="Psat2g039720"/>
</dbReference>
<dbReference type="GeneID" id="127121150"/>
<dbReference type="Gramene" id="Psat2g039720.1">
    <property type="protein sequence ID" value="Psat2g039720.1.cds"/>
    <property type="gene ID" value="Psat2g039720"/>
</dbReference>
<dbReference type="OrthoDB" id="2012505at2759"/>
<dbReference type="GO" id="GO:0005829">
    <property type="term" value="C:cytosol"/>
    <property type="evidence" value="ECO:0007669"/>
    <property type="project" value="UniProtKB-SubCell"/>
</dbReference>
<dbReference type="GO" id="GO:0005634">
    <property type="term" value="C:nucleus"/>
    <property type="evidence" value="ECO:0007669"/>
    <property type="project" value="UniProtKB-SubCell"/>
</dbReference>
<dbReference type="GO" id="GO:0020037">
    <property type="term" value="F:heme binding"/>
    <property type="evidence" value="ECO:0007669"/>
    <property type="project" value="InterPro"/>
</dbReference>
<dbReference type="GO" id="GO:0046872">
    <property type="term" value="F:metal ion binding"/>
    <property type="evidence" value="ECO:0007669"/>
    <property type="project" value="UniProtKB-KW"/>
</dbReference>
<dbReference type="GO" id="GO:0019825">
    <property type="term" value="F:oxygen binding"/>
    <property type="evidence" value="ECO:0007669"/>
    <property type="project" value="InterPro"/>
</dbReference>
<dbReference type="GO" id="GO:0005344">
    <property type="term" value="F:oxygen carrier activity"/>
    <property type="evidence" value="ECO:0007669"/>
    <property type="project" value="UniProtKB-KW"/>
</dbReference>
<dbReference type="GO" id="GO:0009877">
    <property type="term" value="P:nodulation"/>
    <property type="evidence" value="ECO:0007669"/>
    <property type="project" value="UniProtKB-KW"/>
</dbReference>
<dbReference type="GO" id="GO:0009737">
    <property type="term" value="P:response to abscisic acid"/>
    <property type="evidence" value="ECO:0000270"/>
    <property type="project" value="UniProtKB"/>
</dbReference>
<dbReference type="Gene3D" id="1.10.490.10">
    <property type="entry name" value="Globins"/>
    <property type="match status" value="1"/>
</dbReference>
<dbReference type="InterPro" id="IPR000971">
    <property type="entry name" value="Globin"/>
</dbReference>
<dbReference type="InterPro" id="IPR009050">
    <property type="entry name" value="Globin-like_sf"/>
</dbReference>
<dbReference type="InterPro" id="IPR012292">
    <property type="entry name" value="Globin/Proto"/>
</dbReference>
<dbReference type="InterPro" id="IPR001032">
    <property type="entry name" value="Leghaemoglobin-like"/>
</dbReference>
<dbReference type="InterPro" id="IPR019824">
    <property type="entry name" value="Leghaemoglobin_Fe_BS"/>
</dbReference>
<dbReference type="PANTHER" id="PTHR22924">
    <property type="entry name" value="LEGHEMOGLOBIN-RELATED"/>
    <property type="match status" value="1"/>
</dbReference>
<dbReference type="PANTHER" id="PTHR22924:SF92">
    <property type="entry name" value="NON-SYMBIOTIC HEMOGLOBIN 2"/>
    <property type="match status" value="1"/>
</dbReference>
<dbReference type="Pfam" id="PF00042">
    <property type="entry name" value="Globin"/>
    <property type="match status" value="1"/>
</dbReference>
<dbReference type="PRINTS" id="PR00188">
    <property type="entry name" value="PLANTGLOBIN"/>
</dbReference>
<dbReference type="SUPFAM" id="SSF46458">
    <property type="entry name" value="Globin-like"/>
    <property type="match status" value="1"/>
</dbReference>
<dbReference type="PROSITE" id="PS01033">
    <property type="entry name" value="GLOBIN"/>
    <property type="match status" value="1"/>
</dbReference>
<dbReference type="PROSITE" id="PS00208">
    <property type="entry name" value="PLANT_GLOBIN"/>
    <property type="match status" value="1"/>
</dbReference>
<evidence type="ECO:0000250" key="1">
    <source>
        <dbReference type="UniProtKB" id="P02233"/>
    </source>
</evidence>
<evidence type="ECO:0000250" key="2">
    <source>
        <dbReference type="UniProtKB" id="P02234"/>
    </source>
</evidence>
<evidence type="ECO:0000250" key="3">
    <source>
        <dbReference type="UniProtKB" id="P02237"/>
    </source>
</evidence>
<evidence type="ECO:0000250" key="4">
    <source>
        <dbReference type="UniProtKB" id="P02240"/>
    </source>
</evidence>
<evidence type="ECO:0000250" key="5">
    <source>
        <dbReference type="UniProtKB" id="Q3C1F7"/>
    </source>
</evidence>
<evidence type="ECO:0000255" key="6">
    <source>
        <dbReference type="PROSITE-ProRule" id="PRU00238"/>
    </source>
</evidence>
<evidence type="ECO:0000269" key="7">
    <source>
    </source>
</evidence>
<evidence type="ECO:0000269" key="8">
    <source>
    </source>
</evidence>
<evidence type="ECO:0000269" key="9">
    <source>
    </source>
</evidence>
<evidence type="ECO:0000303" key="10">
    <source>
    </source>
</evidence>
<evidence type="ECO:0000305" key="11"/>
<reference key="1">
    <citation type="journal article" date="2001" name="Plant Physiol.">
        <title>Two types of pea leghemoglobin genes showing different O2-binding affinities and distinct patterns of spatial expression in nodules.</title>
        <authorList>
            <person name="Kawashima K."/>
            <person name="Suganuma N."/>
            <person name="Tamaoki M."/>
            <person name="Kouchi H."/>
        </authorList>
    </citation>
    <scope>NUCLEOTIDE SEQUENCE [MRNA]</scope>
    <scope>FUNCTION</scope>
    <scope>TISSUE SPECIFICITY</scope>
    <scope>DEVELOPMENTAL STAGE</scope>
    <scope>GENE FAMILY</scope>
    <scope>NOMENCLATURE</scope>
    <source>
        <strain>cv. Sparkle</strain>
        <tissue>Root nodule</tissue>
    </source>
</reference>
<reference key="2">
    <citation type="journal article" date="2001" name="J. Exp. Bot.">
        <title>Abscisic acid induces a decline in nitrogen fixation that involves leghaemoglobin, but is independent of sucrose synthase activity.</title>
        <authorList>
            <person name="Gonzalez E.M."/>
            <person name="Galvez L."/>
            <person name="Arrese-Igor C."/>
        </authorList>
    </citation>
    <scope>REPRESSION BY ABSCISIC ACID</scope>
    <source>
        <strain>cv. Sugar snap</strain>
    </source>
</reference>
<reference key="3">
    <citation type="journal article" date="2010" name="Plant Cell Environ.">
        <title>Ligands of boron in Pisum sativum nodules are involved in regulation of oxygen concentration and rhizobial infection.</title>
        <authorList>
            <person name="Reguera M."/>
            <person name="Wimmer M."/>
            <person name="Bustos P."/>
            <person name="Goldbach H.E."/>
            <person name="Bolanos L."/>
            <person name="Bonilla I."/>
        </authorList>
    </citation>
    <scope>INDUCTION BY BORON</scope>
    <source>
        <strain>cv. Lincoln</strain>
    </source>
</reference>
<organism>
    <name type="scientific">Pisum sativum</name>
    <name type="common">Garden pea</name>
    <name type="synonym">Lathyrus oleraceus</name>
    <dbReference type="NCBI Taxonomy" id="3888"/>
    <lineage>
        <taxon>Eukaryota</taxon>
        <taxon>Viridiplantae</taxon>
        <taxon>Streptophyta</taxon>
        <taxon>Embryophyta</taxon>
        <taxon>Tracheophyta</taxon>
        <taxon>Spermatophyta</taxon>
        <taxon>Magnoliopsida</taxon>
        <taxon>eudicotyledons</taxon>
        <taxon>Gunneridae</taxon>
        <taxon>Pentapetalae</taxon>
        <taxon>rosids</taxon>
        <taxon>fabids</taxon>
        <taxon>Fabales</taxon>
        <taxon>Fabaceae</taxon>
        <taxon>Papilionoideae</taxon>
        <taxon>50 kb inversion clade</taxon>
        <taxon>NPAAA clade</taxon>
        <taxon>Hologalegina</taxon>
        <taxon>IRL clade</taxon>
        <taxon>Fabeae</taxon>
        <taxon>Pisum</taxon>
    </lineage>
</organism>
<feature type="initiator methionine" description="Removed" evidence="1">
    <location>
        <position position="1"/>
    </location>
</feature>
<feature type="chain" id="PRO_0000192993" description="Leghemoglobin Lb120-1">
    <location>
        <begin position="2"/>
        <end position="146"/>
    </location>
</feature>
<feature type="domain" description="Globin" evidence="6">
    <location>
        <begin position="2"/>
        <end position="146"/>
    </location>
</feature>
<feature type="binding site" evidence="4">
    <location>
        <position position="44"/>
    </location>
    <ligand>
        <name>heme b</name>
        <dbReference type="ChEBI" id="CHEBI:60344"/>
    </ligand>
</feature>
<feature type="binding site" evidence="4">
    <location>
        <position position="61"/>
    </location>
    <ligand>
        <name>O2</name>
        <dbReference type="ChEBI" id="CHEBI:15379"/>
    </ligand>
</feature>
<feature type="binding site" evidence="4">
    <location>
        <position position="64"/>
    </location>
    <ligand>
        <name>heme b</name>
        <dbReference type="ChEBI" id="CHEBI:60344"/>
    </ligand>
</feature>
<feature type="binding site" description="proximal binding residue" evidence="6">
    <location>
        <position position="93"/>
    </location>
    <ligand>
        <name>heme b</name>
        <dbReference type="ChEBI" id="CHEBI:60344"/>
    </ligand>
    <ligandPart>
        <name>Fe</name>
        <dbReference type="ChEBI" id="CHEBI:18248"/>
    </ligandPart>
</feature>
<feature type="binding site" evidence="4">
    <location>
        <position position="96"/>
    </location>
    <ligand>
        <name>heme b</name>
        <dbReference type="ChEBI" id="CHEBI:60344"/>
    </ligand>
</feature>
<feature type="modified residue" description="Nitrated tyrosine" evidence="2">
    <location>
        <position position="24"/>
    </location>
</feature>
<feature type="modified residue" description="Nitrated tyrosine" evidence="2">
    <location>
        <position position="29"/>
    </location>
</feature>
<feature type="modified residue" description="Phosphoserine" evidence="5">
    <location>
        <position position="44"/>
    </location>
</feature>
<feature type="modified residue" description="Nitrated tyrosine" evidence="2">
    <location>
        <position position="134"/>
    </location>
</feature>